<accession>P32067</accession>
<comment type="function">
    <text>Binds to the 3' poly(U) terminus of nascent RNA polymerase III transcripts, protecting them from exonuclease digestion and facilitating their folding and maturation.</text>
</comment>
<comment type="subunit">
    <text evidence="1">Interacts with DDX15. May interact with RUFY1 (By similarity).</text>
</comment>
<comment type="subcellular location">
    <subcellularLocation>
        <location evidence="7">Nucleus</location>
    </subcellularLocation>
</comment>
<comment type="PTM">
    <text evidence="1">Phosphorylated.</text>
</comment>
<keyword id="KW-0007">Acetylation</keyword>
<keyword id="KW-0539">Nucleus</keyword>
<keyword id="KW-0597">Phosphoprotein</keyword>
<keyword id="KW-1185">Reference proteome</keyword>
<keyword id="KW-0694">RNA-binding</keyword>
<gene>
    <name type="primary">Ssb</name>
    <name type="synonym">Ss-b</name>
</gene>
<feature type="chain" id="PRO_0000207600" description="Lupus La protein homolog">
    <location>
        <begin position="1"/>
        <end position="415"/>
    </location>
</feature>
<feature type="domain" description="HTH La-type RNA-binding" evidence="4">
    <location>
        <begin position="7"/>
        <end position="99"/>
    </location>
</feature>
<feature type="domain" description="RRM" evidence="3">
    <location>
        <begin position="111"/>
        <end position="187"/>
    </location>
</feature>
<feature type="domain" description="xRRM" evidence="5">
    <location>
        <begin position="226"/>
        <end position="346"/>
    </location>
</feature>
<feature type="region of interest" description="Disordered" evidence="6">
    <location>
        <begin position="349"/>
        <end position="415"/>
    </location>
</feature>
<feature type="compositionally biased region" description="Basic and acidic residues" evidence="6">
    <location>
        <begin position="377"/>
        <end position="415"/>
    </location>
</feature>
<feature type="modified residue" description="Phosphoserine" evidence="2">
    <location>
        <position position="92"/>
    </location>
</feature>
<feature type="modified residue" description="Phosphoserine" evidence="2">
    <location>
        <position position="94"/>
    </location>
</feature>
<feature type="modified residue" description="N6-acetyllysine" evidence="2">
    <location>
        <position position="116"/>
    </location>
</feature>
<feature type="modified residue" description="Phosphothreonine" evidence="2">
    <location>
        <position position="120"/>
    </location>
</feature>
<feature type="modified residue" description="N6-acetyllysine" evidence="2">
    <location>
        <position position="128"/>
    </location>
</feature>
<feature type="modified residue" description="N6-acetyllysine" evidence="8">
    <location>
        <position position="327"/>
    </location>
</feature>
<feature type="modified residue" description="N6-acetyllysine" evidence="8">
    <location>
        <position position="356"/>
    </location>
</feature>
<feature type="modified residue" description="Phosphothreonine" evidence="2">
    <location>
        <position position="377"/>
    </location>
</feature>
<organism>
    <name type="scientific">Mus musculus</name>
    <name type="common">Mouse</name>
    <dbReference type="NCBI Taxonomy" id="10090"/>
    <lineage>
        <taxon>Eukaryota</taxon>
        <taxon>Metazoa</taxon>
        <taxon>Chordata</taxon>
        <taxon>Craniata</taxon>
        <taxon>Vertebrata</taxon>
        <taxon>Euteleostomi</taxon>
        <taxon>Mammalia</taxon>
        <taxon>Eutheria</taxon>
        <taxon>Euarchontoglires</taxon>
        <taxon>Glires</taxon>
        <taxon>Rodentia</taxon>
        <taxon>Myomorpha</taxon>
        <taxon>Muroidea</taxon>
        <taxon>Muridae</taxon>
        <taxon>Murinae</taxon>
        <taxon>Mus</taxon>
        <taxon>Mus</taxon>
    </lineage>
</organism>
<dbReference type="EMBL" id="L00993">
    <property type="protein sequence ID" value="AAA39415.1"/>
    <property type="molecule type" value="mRNA"/>
</dbReference>
<dbReference type="EMBL" id="BC003820">
    <property type="protein sequence ID" value="AAH03820.1"/>
    <property type="molecule type" value="mRNA"/>
</dbReference>
<dbReference type="EMBL" id="Y07951">
    <property type="protein sequence ID" value="CAA69249.1"/>
    <property type="molecule type" value="mRNA"/>
</dbReference>
<dbReference type="CCDS" id="CCDS16101.1"/>
<dbReference type="RefSeq" id="NP_001103615.1">
    <property type="nucleotide sequence ID" value="NM_001110145.2"/>
</dbReference>
<dbReference type="RefSeq" id="NP_001407972.1">
    <property type="nucleotide sequence ID" value="NM_001421043.1"/>
</dbReference>
<dbReference type="RefSeq" id="NP_001407973.1">
    <property type="nucleotide sequence ID" value="NM_001421044.1"/>
</dbReference>
<dbReference type="RefSeq" id="NP_001407974.1">
    <property type="nucleotide sequence ID" value="NM_001421045.1"/>
</dbReference>
<dbReference type="RefSeq" id="NP_033304.1">
    <property type="nucleotide sequence ID" value="NM_009278.5"/>
</dbReference>
<dbReference type="SMR" id="P32067"/>
<dbReference type="BioGRID" id="203508">
    <property type="interactions" value="42"/>
</dbReference>
<dbReference type="DIP" id="DIP-37706N"/>
<dbReference type="FunCoup" id="P32067">
    <property type="interactions" value="4912"/>
</dbReference>
<dbReference type="IntAct" id="P32067">
    <property type="interactions" value="5"/>
</dbReference>
<dbReference type="MINT" id="P32067"/>
<dbReference type="STRING" id="10090.ENSMUSP00000130313"/>
<dbReference type="GlyGen" id="P32067">
    <property type="glycosylation" value="1 site, 1 O-linked glycan (1 site)"/>
</dbReference>
<dbReference type="iPTMnet" id="P32067"/>
<dbReference type="PhosphoSitePlus" id="P32067"/>
<dbReference type="SwissPalm" id="P32067"/>
<dbReference type="jPOST" id="P32067"/>
<dbReference type="PaxDb" id="10090-ENSMUSP00000088365"/>
<dbReference type="PeptideAtlas" id="P32067"/>
<dbReference type="ProteomicsDB" id="264979"/>
<dbReference type="Pumba" id="P32067"/>
<dbReference type="Antibodypedia" id="2797">
    <property type="antibodies" value="589 antibodies from 38 providers"/>
</dbReference>
<dbReference type="DNASU" id="20823"/>
<dbReference type="Ensembl" id="ENSMUST00000090852.11">
    <property type="protein sequence ID" value="ENSMUSP00000088365.5"/>
    <property type="gene ID" value="ENSMUSG00000068882.14"/>
</dbReference>
<dbReference type="Ensembl" id="ENSMUST00000166411.8">
    <property type="protein sequence ID" value="ENSMUSP00000130313.2"/>
    <property type="gene ID" value="ENSMUSG00000068882.14"/>
</dbReference>
<dbReference type="GeneID" id="20823"/>
<dbReference type="KEGG" id="mmu:20823"/>
<dbReference type="UCSC" id="uc008jyt.2">
    <property type="organism name" value="mouse"/>
</dbReference>
<dbReference type="AGR" id="MGI:98423"/>
<dbReference type="CTD" id="6741"/>
<dbReference type="MGI" id="MGI:98423">
    <property type="gene designation" value="Ssb"/>
</dbReference>
<dbReference type="VEuPathDB" id="HostDB:ENSMUSG00000068882"/>
<dbReference type="eggNOG" id="KOG4213">
    <property type="taxonomic scope" value="Eukaryota"/>
</dbReference>
<dbReference type="GeneTree" id="ENSGT00830000128380"/>
<dbReference type="HOGENOM" id="CLU_042341_0_0_1"/>
<dbReference type="InParanoid" id="P32067"/>
<dbReference type="OMA" id="QFERSIY"/>
<dbReference type="OrthoDB" id="439993at2759"/>
<dbReference type="PhylomeDB" id="P32067"/>
<dbReference type="TreeFam" id="TF314476"/>
<dbReference type="BioGRID-ORCS" id="20823">
    <property type="hits" value="14 hits in 78 CRISPR screens"/>
</dbReference>
<dbReference type="ChiTaRS" id="Ssb">
    <property type="organism name" value="mouse"/>
</dbReference>
<dbReference type="PRO" id="PR:P32067"/>
<dbReference type="Proteomes" id="UP000000589">
    <property type="component" value="Chromosome 2"/>
</dbReference>
<dbReference type="RNAct" id="P32067">
    <property type="molecule type" value="protein"/>
</dbReference>
<dbReference type="Bgee" id="ENSMUSG00000068882">
    <property type="expression patterns" value="Expressed in embryonic post-anal tail and 261 other cell types or tissues"/>
</dbReference>
<dbReference type="ExpressionAtlas" id="P32067">
    <property type="expression patterns" value="baseline and differential"/>
</dbReference>
<dbReference type="GO" id="GO:0005737">
    <property type="term" value="C:cytoplasm"/>
    <property type="evidence" value="ECO:0007669"/>
    <property type="project" value="Ensembl"/>
</dbReference>
<dbReference type="GO" id="GO:0005634">
    <property type="term" value="C:nucleus"/>
    <property type="evidence" value="ECO:0000314"/>
    <property type="project" value="MGI"/>
</dbReference>
<dbReference type="GO" id="GO:1990904">
    <property type="term" value="C:ribonucleoprotein complex"/>
    <property type="evidence" value="ECO:0007669"/>
    <property type="project" value="InterPro"/>
</dbReference>
<dbReference type="GO" id="GO:0008266">
    <property type="term" value="F:poly(U) RNA binding"/>
    <property type="evidence" value="ECO:0007669"/>
    <property type="project" value="Ensembl"/>
</dbReference>
<dbReference type="GO" id="GO:0003723">
    <property type="term" value="F:RNA binding"/>
    <property type="evidence" value="ECO:0000314"/>
    <property type="project" value="MGI"/>
</dbReference>
<dbReference type="GO" id="GO:1990825">
    <property type="term" value="F:sequence-specific mRNA binding"/>
    <property type="evidence" value="ECO:0007669"/>
    <property type="project" value="Ensembl"/>
</dbReference>
<dbReference type="GO" id="GO:0000049">
    <property type="term" value="F:tRNA binding"/>
    <property type="evidence" value="ECO:0007669"/>
    <property type="project" value="Ensembl"/>
</dbReference>
<dbReference type="GO" id="GO:0075522">
    <property type="term" value="P:IRES-dependent viral translational initiation"/>
    <property type="evidence" value="ECO:0007669"/>
    <property type="project" value="Ensembl"/>
</dbReference>
<dbReference type="GO" id="GO:0071045">
    <property type="term" value="P:nuclear histone mRNA catabolic process"/>
    <property type="evidence" value="ECO:0007669"/>
    <property type="project" value="Ensembl"/>
</dbReference>
<dbReference type="GO" id="GO:1903608">
    <property type="term" value="P:protein localization to cytoplasmic stress granule"/>
    <property type="evidence" value="ECO:0007669"/>
    <property type="project" value="Ensembl"/>
</dbReference>
<dbReference type="GO" id="GO:0042780">
    <property type="term" value="P:tRNA 3'-end processing"/>
    <property type="evidence" value="ECO:0007669"/>
    <property type="project" value="Ensembl"/>
</dbReference>
<dbReference type="GO" id="GO:0001682">
    <property type="term" value="P:tRNA 5'-leader removal"/>
    <property type="evidence" value="ECO:0007669"/>
    <property type="project" value="Ensembl"/>
</dbReference>
<dbReference type="GO" id="GO:0006409">
    <property type="term" value="P:tRNA export from nucleus"/>
    <property type="evidence" value="ECO:0007669"/>
    <property type="project" value="Ensembl"/>
</dbReference>
<dbReference type="CDD" id="cd08028">
    <property type="entry name" value="LARP_3"/>
    <property type="match status" value="1"/>
</dbReference>
<dbReference type="CDD" id="cd12291">
    <property type="entry name" value="RRM1_La"/>
    <property type="match status" value="1"/>
</dbReference>
<dbReference type="CDD" id="cd12541">
    <property type="entry name" value="RRM2_La"/>
    <property type="match status" value="1"/>
</dbReference>
<dbReference type="FunFam" id="3.30.70.330:FF:000366">
    <property type="entry name" value="Lupus La protein homolog"/>
    <property type="match status" value="1"/>
</dbReference>
<dbReference type="FunFam" id="1.10.10.10:FF:000336">
    <property type="entry name" value="lupus La protein homolog"/>
    <property type="match status" value="1"/>
</dbReference>
<dbReference type="Gene3D" id="3.30.70.330">
    <property type="match status" value="2"/>
</dbReference>
<dbReference type="Gene3D" id="1.10.10.10">
    <property type="entry name" value="Winged helix-like DNA-binding domain superfamily/Winged helix DNA-binding domain"/>
    <property type="match status" value="1"/>
</dbReference>
<dbReference type="InterPro" id="IPR045180">
    <property type="entry name" value="La_dom_prot"/>
</dbReference>
<dbReference type="InterPro" id="IPR006630">
    <property type="entry name" value="La_HTH"/>
</dbReference>
<dbReference type="InterPro" id="IPR014886">
    <property type="entry name" value="La_xRRM"/>
</dbReference>
<dbReference type="InterPro" id="IPR002344">
    <property type="entry name" value="Lupus_La"/>
</dbReference>
<dbReference type="InterPro" id="IPR012677">
    <property type="entry name" value="Nucleotide-bd_a/b_plait_sf"/>
</dbReference>
<dbReference type="InterPro" id="IPR035979">
    <property type="entry name" value="RBD_domain_sf"/>
</dbReference>
<dbReference type="InterPro" id="IPR000504">
    <property type="entry name" value="RRM_dom"/>
</dbReference>
<dbReference type="InterPro" id="IPR036388">
    <property type="entry name" value="WH-like_DNA-bd_sf"/>
</dbReference>
<dbReference type="InterPro" id="IPR036390">
    <property type="entry name" value="WH_DNA-bd_sf"/>
</dbReference>
<dbReference type="PANTHER" id="PTHR22792:SF166">
    <property type="entry name" value="LUPUS LA PROTEIN HOMOLOG"/>
    <property type="match status" value="1"/>
</dbReference>
<dbReference type="PANTHER" id="PTHR22792">
    <property type="entry name" value="LUPUS LA PROTEIN-RELATED"/>
    <property type="match status" value="1"/>
</dbReference>
<dbReference type="Pfam" id="PF05383">
    <property type="entry name" value="La"/>
    <property type="match status" value="1"/>
</dbReference>
<dbReference type="Pfam" id="PF00076">
    <property type="entry name" value="RRM_1"/>
    <property type="match status" value="1"/>
</dbReference>
<dbReference type="Pfam" id="PF08777">
    <property type="entry name" value="RRM_3"/>
    <property type="match status" value="1"/>
</dbReference>
<dbReference type="PRINTS" id="PR00302">
    <property type="entry name" value="LUPUSLA"/>
</dbReference>
<dbReference type="SMART" id="SM00715">
    <property type="entry name" value="LA"/>
    <property type="match status" value="1"/>
</dbReference>
<dbReference type="SMART" id="SM00360">
    <property type="entry name" value="RRM"/>
    <property type="match status" value="1"/>
</dbReference>
<dbReference type="SUPFAM" id="SSF54928">
    <property type="entry name" value="RNA-binding domain, RBD"/>
    <property type="match status" value="2"/>
</dbReference>
<dbReference type="SUPFAM" id="SSF46785">
    <property type="entry name" value="Winged helix' DNA-binding domain"/>
    <property type="match status" value="1"/>
</dbReference>
<dbReference type="PROSITE" id="PS50961">
    <property type="entry name" value="HTH_LA"/>
    <property type="match status" value="1"/>
</dbReference>
<dbReference type="PROSITE" id="PS50102">
    <property type="entry name" value="RRM"/>
    <property type="match status" value="1"/>
</dbReference>
<dbReference type="PROSITE" id="PS51939">
    <property type="entry name" value="XRRM"/>
    <property type="match status" value="1"/>
</dbReference>
<evidence type="ECO:0000250" key="1"/>
<evidence type="ECO:0000250" key="2">
    <source>
        <dbReference type="UniProtKB" id="P05455"/>
    </source>
</evidence>
<evidence type="ECO:0000255" key="3">
    <source>
        <dbReference type="PROSITE-ProRule" id="PRU00176"/>
    </source>
</evidence>
<evidence type="ECO:0000255" key="4">
    <source>
        <dbReference type="PROSITE-ProRule" id="PRU00332"/>
    </source>
</evidence>
<evidence type="ECO:0000255" key="5">
    <source>
        <dbReference type="PROSITE-ProRule" id="PRU01288"/>
    </source>
</evidence>
<evidence type="ECO:0000256" key="6">
    <source>
        <dbReference type="SAM" id="MobiDB-lite"/>
    </source>
</evidence>
<evidence type="ECO:0000305" key="7"/>
<evidence type="ECO:0007744" key="8">
    <source>
    </source>
</evidence>
<proteinExistence type="evidence at protein level"/>
<sequence length="415" mass="47756">MAENGDNEKMTALEAKICHQIEYYFGDFNLPRDKFLKEQIKLDEGWVPLETMIKFNRLNRLTTDFNVIVQALSKSKAKLMEVSADKTKIRRSPSRPLPEVTDEYKNDVKNRSVYIKGFPTDATLDDIKEWLDDKGQILNIQMRRTLHKTFKGSIFAVFDSIQSAKKFVEIPGQKYKDTNLLILFKEDYFAKKNEERKQSKVEAKLKAKQEHEGRHKPGSTETRALEGKMGCLLKFSGDLDDQTCREDLHFLFSNHGEIKWVDFARGAKEGIILFKEKAKEALEKARNANNGNLLLRNKKVTWKVLEGHAEKEALKKITDDQQESLNKWKSKGGHAGGRFKGSHVFTAARRFKGKGKGNRPGYAGAPKGRGQFHGRRTRFDDDDRRRGPMKRGRDGRDREEPASKHKKRENGARDK</sequence>
<name>LA_MOUSE</name>
<protein>
    <recommendedName>
        <fullName>Lupus La protein homolog</fullName>
    </recommendedName>
    <alternativeName>
        <fullName>La autoantigen homolog</fullName>
    </alternativeName>
    <alternativeName>
        <fullName>La ribonucleoprotein</fullName>
    </alternativeName>
</protein>
<reference key="1">
    <citation type="journal article" date="1993" name="J. Immunol.">
        <title>Characterization of the mouse autoantigen La (SS-B). Identification of conserved RNA-binding motifs, a putative ATP binding site and reactivity of recombinant protein with poly(U) and human autoantibodies.</title>
        <authorList>
            <person name="Topfer F."/>
            <person name="Gordon T."/>
            <person name="McCluskey J."/>
        </authorList>
    </citation>
    <scope>NUCLEOTIDE SEQUENCE [MRNA]</scope>
</reference>
<reference key="2">
    <citation type="journal article" date="2004" name="Genome Res.">
        <title>The status, quality, and expansion of the NIH full-length cDNA project: the Mammalian Gene Collection (MGC).</title>
        <authorList>
            <consortium name="The MGC Project Team"/>
        </authorList>
    </citation>
    <scope>NUCLEOTIDE SEQUENCE [LARGE SCALE MRNA]</scope>
    <source>
        <strain>FVB/N</strain>
        <tissue>Mammary gland</tissue>
    </source>
</reference>
<reference key="3">
    <citation type="submission" date="1996-10" db="EMBL/GenBank/DDBJ databases">
        <authorList>
            <person name="Groelz D."/>
            <person name="Bachmann M."/>
        </authorList>
    </citation>
    <scope>NUCLEOTIDE SEQUENCE [MRNA] OF 1-11</scope>
</reference>
<reference key="4">
    <citation type="journal article" date="2010" name="Cell">
        <title>A tissue-specific atlas of mouse protein phosphorylation and expression.</title>
        <authorList>
            <person name="Huttlin E.L."/>
            <person name="Jedrychowski M.P."/>
            <person name="Elias J.E."/>
            <person name="Goswami T."/>
            <person name="Rad R."/>
            <person name="Beausoleil S.A."/>
            <person name="Villen J."/>
            <person name="Haas W."/>
            <person name="Sowa M.E."/>
            <person name="Gygi S.P."/>
        </authorList>
    </citation>
    <scope>IDENTIFICATION BY MASS SPECTROMETRY [LARGE SCALE ANALYSIS]</scope>
    <source>
        <tissue>Brain</tissue>
        <tissue>Brown adipose tissue</tissue>
        <tissue>Heart</tissue>
        <tissue>Kidney</tissue>
        <tissue>Liver</tissue>
        <tissue>Lung</tissue>
        <tissue>Pancreas</tissue>
        <tissue>Spleen</tissue>
        <tissue>Testis</tissue>
    </source>
</reference>
<reference key="5">
    <citation type="journal article" date="2013" name="Mol. Cell">
        <title>SIRT5-mediated lysine desuccinylation impacts diverse metabolic pathways.</title>
        <authorList>
            <person name="Park J."/>
            <person name="Chen Y."/>
            <person name="Tishkoff D.X."/>
            <person name="Peng C."/>
            <person name="Tan M."/>
            <person name="Dai L."/>
            <person name="Xie Z."/>
            <person name="Zhang Y."/>
            <person name="Zwaans B.M."/>
            <person name="Skinner M.E."/>
            <person name="Lombard D.B."/>
            <person name="Zhao Y."/>
        </authorList>
    </citation>
    <scope>ACETYLATION [LARGE SCALE ANALYSIS] AT LYS-327 AND LYS-356</scope>
    <scope>IDENTIFICATION BY MASS SPECTROMETRY [LARGE SCALE ANALYSIS]</scope>
    <source>
        <tissue>Embryonic fibroblast</tissue>
    </source>
</reference>